<name>LEC1_DABRR</name>
<organism>
    <name type="scientific">Daboia russelii</name>
    <name type="common">Russel's viper</name>
    <name type="synonym">Vipera russelii</name>
    <dbReference type="NCBI Taxonomy" id="8707"/>
    <lineage>
        <taxon>Eukaryota</taxon>
        <taxon>Metazoa</taxon>
        <taxon>Chordata</taxon>
        <taxon>Craniata</taxon>
        <taxon>Vertebrata</taxon>
        <taxon>Euteleostomi</taxon>
        <taxon>Lepidosauria</taxon>
        <taxon>Squamata</taxon>
        <taxon>Bifurcata</taxon>
        <taxon>Unidentata</taxon>
        <taxon>Episquamata</taxon>
        <taxon>Toxicofera</taxon>
        <taxon>Serpentes</taxon>
        <taxon>Colubroidea</taxon>
        <taxon>Viperidae</taxon>
        <taxon>Viperinae</taxon>
        <taxon>Daboia</taxon>
    </lineage>
</organism>
<dbReference type="GO" id="GO:0005576">
    <property type="term" value="C:extracellular region"/>
    <property type="evidence" value="ECO:0007669"/>
    <property type="project" value="UniProtKB-SubCell"/>
</dbReference>
<dbReference type="GO" id="GO:0030246">
    <property type="term" value="F:carbohydrate binding"/>
    <property type="evidence" value="ECO:0007669"/>
    <property type="project" value="UniProtKB-KW"/>
</dbReference>
<protein>
    <recommendedName>
        <fullName>C-type lectin domain-containing protein 1</fullName>
        <shortName evidence="4">CLP1</shortName>
    </recommendedName>
</protein>
<feature type="chain" id="PRO_0000394722" description="C-type lectin domain-containing protein 1">
    <location>
        <begin position="1"/>
        <end position="19" status="greater than"/>
    </location>
</feature>
<feature type="domain" description="C-type lectin" evidence="2">
    <location>
        <begin position="1"/>
        <end position="19" status="greater than"/>
    </location>
</feature>
<feature type="disulfide bond" evidence="1 2">
    <location>
        <begin position="4"/>
        <end position="15"/>
    </location>
</feature>
<feature type="non-terminal residue" evidence="4">
    <location>
        <position position="19"/>
    </location>
</feature>
<reference evidence="5" key="1">
    <citation type="journal article" date="2010" name="Biomed. Res.">
        <title>Molecular diversity in venom proteins of the Russell's viper (Daboia russellii russellii) and the Indian cobra (Naja naja) in Sri Lanka.</title>
        <authorList>
            <person name="Suzuki M."/>
            <person name="Itoh T."/>
            <person name="Bandaranayake B.M.A.I.K."/>
            <person name="Ranasinghe J.G."/>
            <person name="Athauda S.B."/>
            <person name="Moriyama A."/>
        </authorList>
    </citation>
    <scope>PROTEIN SEQUENCE</scope>
    <scope>SUBCELLULAR LOCATION</scope>
    <scope>TISSUE SPECIFICITY</scope>
    <source>
        <tissue evidence="3">Venom</tissue>
    </source>
</reference>
<proteinExistence type="evidence at protein level"/>
<evidence type="ECO:0000250" key="1">
    <source>
        <dbReference type="UniProtKB" id="Q9IAM1"/>
    </source>
</evidence>
<evidence type="ECO:0000255" key="2">
    <source>
        <dbReference type="PROSITE-ProRule" id="PRU00040"/>
    </source>
</evidence>
<evidence type="ECO:0000269" key="3">
    <source>
    </source>
</evidence>
<evidence type="ECO:0000303" key="4">
    <source>
    </source>
</evidence>
<evidence type="ECO:0000305" key="5"/>
<accession>P86533</accession>
<keyword id="KW-0903">Direct protein sequencing</keyword>
<keyword id="KW-1015">Disulfide bond</keyword>
<keyword id="KW-0430">Lectin</keyword>
<keyword id="KW-0964">Secreted</keyword>
<sequence>NQDCLSDWSFYEQYCYKVF</sequence>
<comment type="subcellular location">
    <subcellularLocation>
        <location evidence="3">Secreted</location>
    </subcellularLocation>
</comment>
<comment type="tissue specificity">
    <text evidence="3">Expressed by the venom gland.</text>
</comment>
<comment type="similarity">
    <text evidence="5">Belongs to the true venom lectin family.</text>
</comment>